<evidence type="ECO:0000255" key="1"/>
<evidence type="ECO:0000256" key="2">
    <source>
        <dbReference type="SAM" id="MobiDB-lite"/>
    </source>
</evidence>
<evidence type="ECO:0000305" key="3"/>
<comment type="function">
    <text>The interaction of the RSA site and the PRE protein may not only serves a function in plasmid maintenance, but may also contributes to the distribution of small antibiotic resistance plasmids among Gram-positive bacteria.</text>
</comment>
<comment type="miscellaneous">
    <text>Contains conserved positively charged amino acids probably involved in the binding of the pre protein to the RSA site.</text>
</comment>
<comment type="similarity">
    <text evidence="3">Belongs to the plasmid mobilization pre family.</text>
</comment>
<sequence length="420" mass="49660">MSYAVCRMQKVKSAGLKGMQFHNQRERKSRTNDDIDHERTRENYDLKNDKNIDYNERVKEIIESQKTGTRKTRKDAVLVNELLVTSDRDFFEQLDPGEQKRFFEESYKLFSERYGKQNIAYATVHNDEQTPHMHLGVVPMRDGKLQGKNVFNRQELLWLQDKFPEHMKKQGFELKRGERGSDRKHIETAKFKKQTLEKEIDFLEKNLAVKKDEWTAYSDKVKSDLEVPAKRHMKSVEVPTGEKSMFGLGKEIMKTEKKPTKNVVISERDYKNLVTAARDNDRLKQHVRNLMSTDMAREYKKLSKEHGQVKEKYSGLVERFNENVNDYNELLEENKSLKSKISDLKRDVSLIYESTKEFLKERTDGLKAFKNVFKGFVDKVKDKTAQFQEKHDLEPKKNEFELTHNREVKKERSRDQGMSL</sequence>
<protein>
    <recommendedName>
        <fullName>Plasmid recombination enzyme type 2</fullName>
    </recommendedName>
    <alternativeName>
        <fullName>Mobilization protein</fullName>
    </alternativeName>
    <alternativeName>
        <fullName>Plasmid recombinase</fullName>
    </alternativeName>
</protein>
<gene>
    <name type="primary">pre</name>
    <name type="synonym">mob</name>
</gene>
<keyword id="KW-0238">DNA-binding</keyword>
<keyword id="KW-0614">Plasmid</keyword>
<name>PRE2_STAAU</name>
<organism>
    <name type="scientific">Staphylococcus aureus</name>
    <dbReference type="NCBI Taxonomy" id="1280"/>
    <lineage>
        <taxon>Bacteria</taxon>
        <taxon>Bacillati</taxon>
        <taxon>Bacillota</taxon>
        <taxon>Bacilli</taxon>
        <taxon>Bacillales</taxon>
        <taxon>Staphylococcaceae</taxon>
        <taxon>Staphylococcus</taxon>
    </lineage>
</organism>
<dbReference type="EMBL" id="M37273">
    <property type="protein sequence ID" value="AAA98212.1"/>
    <property type="molecule type" value="Genomic_DNA"/>
</dbReference>
<dbReference type="EMBL" id="M19465">
    <property type="protein sequence ID" value="AAA88359.1"/>
    <property type="molecule type" value="Genomic_DNA"/>
</dbReference>
<dbReference type="PIR" id="T44132">
    <property type="entry name" value="T44132"/>
</dbReference>
<dbReference type="RefSeq" id="NP_040431.1">
    <property type="nucleotide sequence ID" value="NC_001384.1"/>
</dbReference>
<dbReference type="RefSeq" id="NP_863619.1">
    <property type="nucleotide sequence ID" value="NC_005024.1"/>
</dbReference>
<dbReference type="RefSeq" id="YP_002790914.1">
    <property type="nucleotide sequence ID" value="NC_012547.1"/>
</dbReference>
<dbReference type="RefSeq" id="YP_006937660.1">
    <property type="nucleotide sequence ID" value="NC_013320.1"/>
</dbReference>
<dbReference type="SMR" id="P0A0C7"/>
<dbReference type="OMA" id="GRIEDWC"/>
<dbReference type="GO" id="GO:0003677">
    <property type="term" value="F:DNA binding"/>
    <property type="evidence" value="ECO:0007669"/>
    <property type="project" value="UniProtKB-KW"/>
</dbReference>
<dbReference type="GO" id="GO:0006310">
    <property type="term" value="P:DNA recombination"/>
    <property type="evidence" value="ECO:0007669"/>
    <property type="project" value="InterPro"/>
</dbReference>
<dbReference type="CDD" id="cd17242">
    <property type="entry name" value="MobM_relaxase"/>
    <property type="match status" value="1"/>
</dbReference>
<dbReference type="Gene3D" id="3.30.930.30">
    <property type="match status" value="1"/>
</dbReference>
<dbReference type="InterPro" id="IPR001668">
    <property type="entry name" value="Mob_Pre"/>
</dbReference>
<dbReference type="NCBIfam" id="NF041497">
    <property type="entry name" value="MobV"/>
    <property type="match status" value="1"/>
</dbReference>
<dbReference type="Pfam" id="PF01076">
    <property type="entry name" value="Mob_Pre"/>
    <property type="match status" value="1"/>
</dbReference>
<reference key="1">
    <citation type="journal article" date="1986" name="Genetika">
        <title>Nucleotide sequence and physical map of kanamycin-resistant plasmid pUB110 from Staphylococcus aureus.</title>
        <authorList>
            <person name="Bashkirov V.I."/>
            <person name="Mil'Shina N.V."/>
            <person name="Prozorov A.A."/>
        </authorList>
    </citation>
    <scope>NUCLEOTIDE SEQUENCE [GENOMIC DNA]</scope>
    <source>
        <plasmid>pUB110</plasmid>
    </source>
</reference>
<reference key="2">
    <citation type="journal article" date="1986" name="Plasmid">
        <title>The nucleotide sequence of pUB110: some salient features in relation to replication and its regulation.</title>
        <authorList>
            <person name="McKenzie T."/>
            <person name="Hoshino T."/>
            <person name="Tanaka T."/>
            <person name="Sueoka N."/>
        </authorList>
    </citation>
    <scope>NUCLEOTIDE SEQUENCE [GENOMIC DNA]</scope>
    <source>
        <plasmid>pUB110</plasmid>
    </source>
</reference>
<reference key="3">
    <citation type="journal article" date="1987" name="Plasmid">
        <title>Correction. A revision of the nucleotide sequence and functional map of pUB110.</title>
        <authorList>
            <person name="McKenzie T."/>
            <person name="Hoshino T."/>
            <person name="Tanaka T."/>
            <person name="Sueoka N."/>
        </authorList>
    </citation>
    <scope>SEQUENCE REVISION</scope>
    <source>
        <plasmid>pUB110</plasmid>
    </source>
</reference>
<proteinExistence type="inferred from homology"/>
<geneLocation type="plasmid">
    <name>pUB110</name>
</geneLocation>
<accession>P0A0C7</accession>
<accession>P22490</accession>
<accession>Q52091</accession>
<feature type="chain" id="PRO_0000068423" description="Plasmid recombination enzyme type 2">
    <location>
        <begin position="1"/>
        <end position="420"/>
    </location>
</feature>
<feature type="region of interest" description="Disordered" evidence="2">
    <location>
        <begin position="388"/>
        <end position="420"/>
    </location>
</feature>
<feature type="binding site" evidence="1">
    <location>
        <position position="44"/>
    </location>
    <ligand>
        <name>DNA</name>
        <dbReference type="ChEBI" id="CHEBI:16991"/>
    </ligand>
</feature>
<feature type="binding site" evidence="1">
    <location>
        <position position="114"/>
    </location>
    <ligand>
        <name>DNA</name>
        <dbReference type="ChEBI" id="CHEBI:16991"/>
    </ligand>
</feature>